<reference key="1">
    <citation type="submission" date="2004-06" db="EMBL/GenBank/DDBJ databases">
        <authorList>
            <consortium name="NIH - Xenopus Gene Collection (XGC) project"/>
        </authorList>
    </citation>
    <scope>NUCLEOTIDE SEQUENCE [LARGE SCALE MRNA]</scope>
    <source>
        <tissue>Embryo</tissue>
    </source>
</reference>
<evidence type="ECO:0000250" key="1">
    <source>
        <dbReference type="UniProtKB" id="Q8C119"/>
    </source>
</evidence>
<evidence type="ECO:0000250" key="2">
    <source>
        <dbReference type="UniProtKB" id="Q8TB73"/>
    </source>
</evidence>
<evidence type="ECO:0000255" key="3"/>
<keyword id="KW-0325">Glycoprotein</keyword>
<keyword id="KW-0524">Neurogenesis</keyword>
<keyword id="KW-1185">Reference proteome</keyword>
<keyword id="KW-0677">Repeat</keyword>
<keyword id="KW-0964">Secreted</keyword>
<keyword id="KW-0732">Signal</keyword>
<protein>
    <recommendedName>
        <fullName>Protein NDNF</fullName>
    </recommendedName>
</protein>
<accession>Q6GNK9</accession>
<comment type="function">
    <text evidence="1 2">Secretory protein that plays a role in various cellular processes. Acts as a chemorepellent acting on gonadotropin-releasing hormone (GnRH) expressing neurons regulating their migration to the hypothalamus. Also promotes neuron migration, growth and survival as well as neurite outgrowth and is involved in the development of the olfactory system. May also act through the regulation of growth factors activity and downstream signaling (By similarity). Also regulates extracellular matrix assembly and cell adhesiveness (By similarity). Promotes endothelial cell survival, vessel formation and plays an important role in the process of revascularization through NOS3-dependent mechanisms (By similarity).</text>
</comment>
<comment type="subcellular location">
    <subcellularLocation>
        <location evidence="1">Secreted</location>
    </subcellularLocation>
</comment>
<proteinExistence type="evidence at transcript level"/>
<feature type="signal peptide" evidence="3">
    <location>
        <begin position="1"/>
        <end position="19"/>
    </location>
</feature>
<feature type="chain" id="PRO_0000301967" description="Protein NDNF">
    <location>
        <begin position="20"/>
        <end position="569"/>
    </location>
</feature>
<feature type="domain" description="Fibronectin type-III 1">
    <location>
        <begin position="261"/>
        <end position="332"/>
    </location>
</feature>
<feature type="domain" description="Fibronectin type-III 2">
    <location>
        <begin position="446"/>
        <end position="565"/>
    </location>
</feature>
<feature type="glycosylation site" description="N-linked (GlcNAc...) asparagine" evidence="3">
    <location>
        <position position="323"/>
    </location>
</feature>
<name>NDNF_XENLA</name>
<dbReference type="EMBL" id="BC073498">
    <property type="protein sequence ID" value="AAH73498.1"/>
    <property type="molecule type" value="mRNA"/>
</dbReference>
<dbReference type="RefSeq" id="NP_001085901.1">
    <property type="nucleotide sequence ID" value="NM_001092432.1"/>
</dbReference>
<dbReference type="GlyCosmos" id="Q6GNK9">
    <property type="glycosylation" value="1 site, No reported glycans"/>
</dbReference>
<dbReference type="DNASU" id="444328"/>
<dbReference type="GeneID" id="444328"/>
<dbReference type="KEGG" id="xla:444328"/>
<dbReference type="AGR" id="Xenbase:XB-GENE-1016854"/>
<dbReference type="CTD" id="444328"/>
<dbReference type="Xenbase" id="XB-GENE-1016854">
    <property type="gene designation" value="ndnf.L"/>
</dbReference>
<dbReference type="OrthoDB" id="9872501at2759"/>
<dbReference type="Proteomes" id="UP000186698">
    <property type="component" value="Chromosome 1L"/>
</dbReference>
<dbReference type="Bgee" id="444328">
    <property type="expression patterns" value="Expressed in camera-type eye and 14 other cell types or tissues"/>
</dbReference>
<dbReference type="GO" id="GO:0031012">
    <property type="term" value="C:extracellular matrix"/>
    <property type="evidence" value="ECO:0000250"/>
    <property type="project" value="UniProtKB"/>
</dbReference>
<dbReference type="GO" id="GO:0005576">
    <property type="term" value="C:extracellular region"/>
    <property type="evidence" value="ECO:0000250"/>
    <property type="project" value="UniProtKB"/>
</dbReference>
<dbReference type="GO" id="GO:0005539">
    <property type="term" value="F:glycosaminoglycan binding"/>
    <property type="evidence" value="ECO:0000250"/>
    <property type="project" value="UniProtKB"/>
</dbReference>
<dbReference type="GO" id="GO:0008201">
    <property type="term" value="F:heparin binding"/>
    <property type="evidence" value="ECO:0000250"/>
    <property type="project" value="UniProtKB"/>
</dbReference>
<dbReference type="GO" id="GO:0044344">
    <property type="term" value="P:cellular response to fibroblast growth factor stimulus"/>
    <property type="evidence" value="ECO:0000250"/>
    <property type="project" value="UniProtKB"/>
</dbReference>
<dbReference type="GO" id="GO:0030198">
    <property type="term" value="P:extracellular matrix organization"/>
    <property type="evidence" value="ECO:0000250"/>
    <property type="project" value="UniProtKB"/>
</dbReference>
<dbReference type="GO" id="GO:0021828">
    <property type="term" value="P:gonadotrophin-releasing hormone neuronal migration to the hypothalamus"/>
    <property type="evidence" value="ECO:0000250"/>
    <property type="project" value="UniProtKB"/>
</dbReference>
<dbReference type="GO" id="GO:0043524">
    <property type="term" value="P:negative regulation of neuron apoptotic process"/>
    <property type="evidence" value="ECO:0000250"/>
    <property type="project" value="UniProtKB"/>
</dbReference>
<dbReference type="GO" id="GO:0001764">
    <property type="term" value="P:neuron migration"/>
    <property type="evidence" value="ECO:0000250"/>
    <property type="project" value="UniProtKB"/>
</dbReference>
<dbReference type="GO" id="GO:0010811">
    <property type="term" value="P:positive regulation of cell-substrate adhesion"/>
    <property type="evidence" value="ECO:0000250"/>
    <property type="project" value="UniProtKB"/>
</dbReference>
<dbReference type="GO" id="GO:0010976">
    <property type="term" value="P:positive regulation of neuron projection development"/>
    <property type="evidence" value="ECO:0000250"/>
    <property type="project" value="UniProtKB"/>
</dbReference>
<dbReference type="CDD" id="cd00063">
    <property type="entry name" value="FN3"/>
    <property type="match status" value="1"/>
</dbReference>
<dbReference type="FunFam" id="2.60.40.10:FF:003194">
    <property type="entry name" value="Neuron-derived neurotrophic factor"/>
    <property type="match status" value="1"/>
</dbReference>
<dbReference type="Gene3D" id="2.60.40.10">
    <property type="entry name" value="Immunoglobulins"/>
    <property type="match status" value="1"/>
</dbReference>
<dbReference type="InterPro" id="IPR003961">
    <property type="entry name" value="FN3_dom"/>
</dbReference>
<dbReference type="InterPro" id="IPR036116">
    <property type="entry name" value="FN3_sf"/>
</dbReference>
<dbReference type="InterPro" id="IPR013783">
    <property type="entry name" value="Ig-like_fold"/>
</dbReference>
<dbReference type="InterPro" id="IPR019326">
    <property type="entry name" value="NDNF"/>
</dbReference>
<dbReference type="InterPro" id="IPR045805">
    <property type="entry name" value="NDNF_C"/>
</dbReference>
<dbReference type="InterPro" id="IPR055271">
    <property type="entry name" value="NDNF_Fn(III)_1"/>
</dbReference>
<dbReference type="InterPro" id="IPR056225">
    <property type="entry name" value="NDNF_N"/>
</dbReference>
<dbReference type="PANTHER" id="PTHR14619">
    <property type="entry name" value="NEURON-DERIVED NEUROTROPHIC FACTOR"/>
    <property type="match status" value="1"/>
</dbReference>
<dbReference type="PANTHER" id="PTHR14619:SF1">
    <property type="entry name" value="PROTEIN NDNF"/>
    <property type="match status" value="1"/>
</dbReference>
<dbReference type="Pfam" id="PF10179">
    <property type="entry name" value="NDNF"/>
    <property type="match status" value="1"/>
</dbReference>
<dbReference type="Pfam" id="PF19433">
    <property type="entry name" value="NDNF_C"/>
    <property type="match status" value="1"/>
</dbReference>
<dbReference type="Pfam" id="PF24354">
    <property type="entry name" value="NDNF_N"/>
    <property type="match status" value="1"/>
</dbReference>
<dbReference type="SMART" id="SM00060">
    <property type="entry name" value="FN3"/>
    <property type="match status" value="2"/>
</dbReference>
<dbReference type="SUPFAM" id="SSF49265">
    <property type="entry name" value="Fibronectin type III"/>
    <property type="match status" value="1"/>
</dbReference>
<sequence>MKLCRWYIALFLLPVCLQSQKLPTRDEELFQMQIRDKALFHDSSVIPDGAEISGYLFRDNPKRYFFVVEEDNTPLSVIVTPCDAPLEWKLTLQELPEEASGEGSGEPEPLEEQKQQIVNEEGTELFSYKGNDVEYFVSSSSPSGLYQLELISTEKDTHFKVYATTTPESDQPYPELPYDPRVDVTSLGRTTITLAWKPTPTSSVMKQPIQYCVVINKEHNFKSICAVEAKMIADDAFMMAPKPGIDFNPFDFAHFGFQSDNSAGKDRNFMPKVSSSKMLRQITKPKVDIQKFCIGNKNIFTVSDLKPDTQYYFDVFAVNAVTNMSTAYVGTFARTKEEAKQKTVELKDGKVTDVFIKRKGTKFLRFSPVSSHQKVTFSVHSCLDAIQIQVRRDGKLLLSQSVEGVRQFQLRGKPKAKYLIRLKGSKKGASMLKILATSKFNKQPFPSLPEDTRIKAFDKLRTCSSATVAWLGTQERNKFCIYKKEVDDDYTEEHKKRDQNQCLGPDTRKKSEKVLCKYFHSQNIHKAVTTETIKGLQPGKSYMLDVYVMGHAGHSVKYQSKIVKTRKFC</sequence>
<gene>
    <name type="primary">ndnf</name>
</gene>
<organism>
    <name type="scientific">Xenopus laevis</name>
    <name type="common">African clawed frog</name>
    <dbReference type="NCBI Taxonomy" id="8355"/>
    <lineage>
        <taxon>Eukaryota</taxon>
        <taxon>Metazoa</taxon>
        <taxon>Chordata</taxon>
        <taxon>Craniata</taxon>
        <taxon>Vertebrata</taxon>
        <taxon>Euteleostomi</taxon>
        <taxon>Amphibia</taxon>
        <taxon>Batrachia</taxon>
        <taxon>Anura</taxon>
        <taxon>Pipoidea</taxon>
        <taxon>Pipidae</taxon>
        <taxon>Xenopodinae</taxon>
        <taxon>Xenopus</taxon>
        <taxon>Xenopus</taxon>
    </lineage>
</organism>